<dbReference type="GO" id="GO:0005576">
    <property type="term" value="C:extracellular region"/>
    <property type="evidence" value="ECO:0007669"/>
    <property type="project" value="UniProtKB-SubCell"/>
</dbReference>
<dbReference type="GO" id="GO:0007218">
    <property type="term" value="P:neuropeptide signaling pathway"/>
    <property type="evidence" value="ECO:0007669"/>
    <property type="project" value="UniProtKB-KW"/>
</dbReference>
<comment type="function">
    <text evidence="1">Myotropic peptide; increases the frequency of contraction of the heart and stimulates amplitude and tonus of the foregut.</text>
</comment>
<comment type="subcellular location">
    <subcellularLocation>
        <location evidence="4">Secreted</location>
    </subcellularLocation>
</comment>
<comment type="tissue specificity">
    <text evidence="3">Found in the abdominal ganglia and perisympathetic organs. Sometimes detected in the thoracic ganglia. Not detected in the subesophageal ganglion, corpora cardiaca, corpora allata, hypocerebral ganglion or frontal ganglion.</text>
</comment>
<comment type="mass spectrometry" mass="1103.6" method="MALDI" evidence="3"/>
<comment type="similarity">
    <text evidence="2">Belongs to the periviscerokinin family.</text>
</comment>
<accession>P85862</accession>
<reference evidence="4" key="1">
    <citation type="journal article" date="2003" name="Biochem. Biophys. Res. Commun.">
        <title>Mass spectrometric analysis of the perisympathetic organs in locusts: identification of novel periviscerokinins.</title>
        <authorList>
            <person name="Clynen E."/>
            <person name="Huybrechts J."/>
            <person name="De Loof A."/>
            <person name="Schoofs L."/>
        </authorList>
    </citation>
    <scope>PROTEIN SEQUENCE</scope>
    <scope>TISSUE SPECIFICITY</scope>
    <scope>MASS SPECTROMETRY</scope>
    <scope>AMIDATION AT VAL-10</scope>
    <source>
        <tissue evidence="3">Abdominal perisympathetic organs</tissue>
    </source>
</reference>
<name>PVK1_SCHGR</name>
<sequence length="10" mass="1105">AAGLFQFPRV</sequence>
<evidence type="ECO:0000250" key="1">
    <source>
        <dbReference type="UniProtKB" id="P83382"/>
    </source>
</evidence>
<evidence type="ECO:0000255" key="2"/>
<evidence type="ECO:0000269" key="3">
    <source>
    </source>
</evidence>
<evidence type="ECO:0000305" key="4"/>
<protein>
    <recommendedName>
        <fullName>Periviscerokinin-1</fullName>
    </recommendedName>
    <alternativeName>
        <fullName>Lom-PVK-1</fullName>
    </alternativeName>
</protein>
<feature type="peptide" id="PRO_0000343530" description="Periviscerokinin-1" evidence="3">
    <location>
        <begin position="1"/>
        <end position="10"/>
    </location>
</feature>
<feature type="modified residue" description="Valine amide" evidence="3">
    <location>
        <position position="10"/>
    </location>
</feature>
<organism>
    <name type="scientific">Schistocerca gregaria</name>
    <name type="common">Desert locust</name>
    <name type="synonym">Gryllus gregarius</name>
    <dbReference type="NCBI Taxonomy" id="7010"/>
    <lineage>
        <taxon>Eukaryota</taxon>
        <taxon>Metazoa</taxon>
        <taxon>Ecdysozoa</taxon>
        <taxon>Arthropoda</taxon>
        <taxon>Hexapoda</taxon>
        <taxon>Insecta</taxon>
        <taxon>Pterygota</taxon>
        <taxon>Neoptera</taxon>
        <taxon>Polyneoptera</taxon>
        <taxon>Orthoptera</taxon>
        <taxon>Caelifera</taxon>
        <taxon>Acrididea</taxon>
        <taxon>Acridomorpha</taxon>
        <taxon>Acridoidea</taxon>
        <taxon>Acrididae</taxon>
        <taxon>Cyrtacanthacridinae</taxon>
        <taxon>Schistocerca</taxon>
    </lineage>
</organism>
<keyword id="KW-0027">Amidation</keyword>
<keyword id="KW-0903">Direct protein sequencing</keyword>
<keyword id="KW-0527">Neuropeptide</keyword>
<keyword id="KW-0964">Secreted</keyword>
<proteinExistence type="evidence at protein level"/>